<accession>Q95MN8</accession>
<comment type="function">
    <text evidence="1">May be important in protein trafficking and/or protein folding and stabilization.</text>
</comment>
<comment type="subunit">
    <text evidence="1">Interacts with NUB1.</text>
</comment>
<comment type="subcellular location">
    <subcellularLocation>
        <location evidence="1">Cytoplasm</location>
    </subcellularLocation>
    <subcellularLocation>
        <location evidence="1">Nucleus</location>
    </subcellularLocation>
</comment>
<evidence type="ECO:0000250" key="1"/>
<evidence type="ECO:0000256" key="2">
    <source>
        <dbReference type="SAM" id="MobiDB-lite"/>
    </source>
</evidence>
<name>AIPL1_PAPCY</name>
<protein>
    <recommendedName>
        <fullName>Aryl-hydrocarbon-interacting protein-like 1</fullName>
    </recommendedName>
</protein>
<feature type="chain" id="PRO_0000075346" description="Aryl-hydrocarbon-interacting protein-like 1">
    <location>
        <begin position="1"/>
        <end position="372"/>
    </location>
</feature>
<feature type="domain" description="PPIase FKBP-type">
    <location>
        <begin position="53"/>
        <end position="145"/>
    </location>
</feature>
<feature type="repeat" description="TPR 1">
    <location>
        <begin position="178"/>
        <end position="211"/>
    </location>
</feature>
<feature type="repeat" description="TPR 2">
    <location>
        <begin position="230"/>
        <end position="263"/>
    </location>
</feature>
<feature type="repeat" description="TPR 3">
    <location>
        <begin position="264"/>
        <end position="297"/>
    </location>
</feature>
<feature type="region of interest" description="Disordered" evidence="2">
    <location>
        <begin position="315"/>
        <end position="372"/>
    </location>
</feature>
<feature type="compositionally biased region" description="Pro residues" evidence="2">
    <location>
        <begin position="335"/>
        <end position="345"/>
    </location>
</feature>
<organism>
    <name type="scientific">Papio cynocephalus</name>
    <name type="common">Yellow baboon</name>
    <dbReference type="NCBI Taxonomy" id="9556"/>
    <lineage>
        <taxon>Eukaryota</taxon>
        <taxon>Metazoa</taxon>
        <taxon>Chordata</taxon>
        <taxon>Craniata</taxon>
        <taxon>Vertebrata</taxon>
        <taxon>Euteleostomi</taxon>
        <taxon>Mammalia</taxon>
        <taxon>Eutheria</taxon>
        <taxon>Euarchontoglires</taxon>
        <taxon>Primates</taxon>
        <taxon>Haplorrhini</taxon>
        <taxon>Catarrhini</taxon>
        <taxon>Cercopithecidae</taxon>
        <taxon>Cercopithecinae</taxon>
        <taxon>Papio</taxon>
    </lineage>
</organism>
<reference key="1">
    <citation type="journal article" date="2001" name="Mamm. Genome">
        <title>Comparative analysis of aryl-hydrocarbon receptor interacting protein-like 1 (Aipl1), a gene associated with inherited retinal disease in humans.</title>
        <authorList>
            <person name="Sohocki M.M."/>
            <person name="Sullivan L.S."/>
            <person name="Tirpak D.L."/>
            <person name="Daiger S.P."/>
        </authorList>
    </citation>
    <scope>NUCLEOTIDE SEQUENCE [MRNA]</scope>
</reference>
<gene>
    <name type="primary">AIPL1</name>
</gene>
<sequence length="372" mass="42907">MDAALLLNVEGVKKTILHGGTGELPNFITGSRVIFHFRTMKCDEERTVIDDSRQVDQPMHIIIGNMFKLEVWEILLTSMRVHEVAEFWCDTIHTGVYPILSRSLRQMAQGKDPTEWHVHTCGLANMFAYHTLGYEDLDELQKEPQPLIFVIELLQVDAPSDYQRETWNLSNHEKMKVVPVLHGEGNRLFKLGRYEEASSKYQEAIICLRNLQTKEKPWEVQWLKLEKMINTLTLNYCQCLLKKEEYYEVLEHTSDILRHHPGIVKAYYVRARAHAEVWNEAEAKADLQKVLELEPSMQKAVRRELRLLENRMAEKQEEERLRCRNMLSQGATQPPTEPPAEPHTAPPAELSTGPPAEPPAELPLSPGHSLQH</sequence>
<dbReference type="EMBL" id="AF296414">
    <property type="protein sequence ID" value="AAK77958.1"/>
    <property type="molecule type" value="mRNA"/>
</dbReference>
<dbReference type="SMR" id="Q95MN8"/>
<dbReference type="GO" id="GO:0005737">
    <property type="term" value="C:cytoplasm"/>
    <property type="evidence" value="ECO:0007669"/>
    <property type="project" value="UniProtKB-SubCell"/>
</dbReference>
<dbReference type="GO" id="GO:0005634">
    <property type="term" value="C:nucleus"/>
    <property type="evidence" value="ECO:0007669"/>
    <property type="project" value="UniProtKB-SubCell"/>
</dbReference>
<dbReference type="GO" id="GO:0003755">
    <property type="term" value="F:peptidyl-prolyl cis-trans isomerase activity"/>
    <property type="evidence" value="ECO:0007669"/>
    <property type="project" value="InterPro"/>
</dbReference>
<dbReference type="FunFam" id="1.25.40.10:FF:000052">
    <property type="entry name" value="Aryl-hydrocarbon-interacting protein-like 1"/>
    <property type="match status" value="1"/>
</dbReference>
<dbReference type="FunFam" id="3.10.50.40:FF:000018">
    <property type="entry name" value="Aryl-hydrocarbon-interacting protein-like 1"/>
    <property type="match status" value="1"/>
</dbReference>
<dbReference type="Gene3D" id="3.10.50.40">
    <property type="match status" value="1"/>
</dbReference>
<dbReference type="Gene3D" id="1.25.40.10">
    <property type="entry name" value="Tetratricopeptide repeat domain"/>
    <property type="match status" value="1"/>
</dbReference>
<dbReference type="InterPro" id="IPR039663">
    <property type="entry name" value="AIP/AIPL1/TTC9"/>
</dbReference>
<dbReference type="InterPro" id="IPR056277">
    <property type="entry name" value="PPIase_AIP"/>
</dbReference>
<dbReference type="InterPro" id="IPR046357">
    <property type="entry name" value="PPIase_dom_sf"/>
</dbReference>
<dbReference type="InterPro" id="IPR011990">
    <property type="entry name" value="TPR-like_helical_dom_sf"/>
</dbReference>
<dbReference type="InterPro" id="IPR019734">
    <property type="entry name" value="TPR_rpt"/>
</dbReference>
<dbReference type="PANTHER" id="PTHR11242">
    <property type="entry name" value="ARYL HYDROCARBON RECEPTOR INTERACTING PROTEIN RELATED"/>
    <property type="match status" value="1"/>
</dbReference>
<dbReference type="PANTHER" id="PTHR11242:SF2">
    <property type="entry name" value="ARYL-HYDROCARBON-INTERACTING PROTEIN-LIKE 1"/>
    <property type="match status" value="1"/>
</dbReference>
<dbReference type="Pfam" id="PF23322">
    <property type="entry name" value="PPIase_AIP"/>
    <property type="match status" value="1"/>
</dbReference>
<dbReference type="SMART" id="SM00028">
    <property type="entry name" value="TPR"/>
    <property type="match status" value="2"/>
</dbReference>
<dbReference type="SUPFAM" id="SSF54534">
    <property type="entry name" value="FKBP-like"/>
    <property type="match status" value="1"/>
</dbReference>
<dbReference type="SUPFAM" id="SSF48452">
    <property type="entry name" value="TPR-like"/>
    <property type="match status" value="1"/>
</dbReference>
<dbReference type="PROSITE" id="PS50293">
    <property type="entry name" value="TPR_REGION"/>
    <property type="match status" value="2"/>
</dbReference>
<proteinExistence type="evidence at transcript level"/>
<keyword id="KW-0963">Cytoplasm</keyword>
<keyword id="KW-0539">Nucleus</keyword>
<keyword id="KW-0677">Repeat</keyword>
<keyword id="KW-0802">TPR repeat</keyword>